<gene>
    <name evidence="6" type="primary">PTH</name>
</gene>
<reference key="1">
    <citation type="journal article" date="1979" name="Proc. Natl. Acad. Sci. U.S.A.">
        <title>Cloning and nucleotide sequence of DNA coding for bovine preproparathyroid hormone.</title>
        <authorList>
            <person name="Kronenberg H.M."/>
            <person name="McDevitt B.E."/>
            <person name="Majzoub J.A."/>
            <person name="Nathans J."/>
            <person name="Sharp P.A."/>
            <person name="Potts J.T. Jr."/>
            <person name="Rich A."/>
        </authorList>
    </citation>
    <scope>NUCLEOTIDE SEQUENCE [MRNA]</scope>
</reference>
<reference key="2">
    <citation type="journal article" date="1981" name="Proc. Natl. Acad. Sci. U.S.A.">
        <title>Introduction by molecular cloning of artifactual inverted sequences at the 5' terminus of the sense strand of bovine parathyroid hormone cDNA.</title>
        <authorList>
            <person name="Weaver C.A."/>
            <person name="Gordon D.F."/>
            <person name="Kemper B."/>
        </authorList>
    </citation>
    <scope>NUCLEOTIDE SEQUENCE [MRNA]</scope>
</reference>
<reference key="3">
    <citation type="journal article" date="1982" name="Mol. Cell. Endocrinol.">
        <title>Nucleotide sequence of bovine parathyroid hormone messenger RNA.</title>
        <authorList>
            <person name="Weaver C.A."/>
            <person name="Gordon D.F."/>
            <person name="Kemper B."/>
        </authorList>
    </citation>
    <scope>NUCLEOTIDE SEQUENCE [MRNA]</scope>
</reference>
<reference key="4">
    <citation type="journal article" date="1984" name="Gene">
        <title>Isolation and complete nucleotide sequence of the gene for bovine parathyroid hormone.</title>
        <authorList>
            <person name="Weaver C.A."/>
            <person name="Gordon D.F."/>
            <person name="Kissil M.S."/>
            <person name="Mead D.A."/>
            <person name="Kemper B."/>
        </authorList>
    </citation>
    <scope>NUCLEOTIDE SEQUENCE [GENOMIC DNA]</scope>
</reference>
<reference key="5">
    <citation type="journal article" date="1974" name="Proc. Natl. Acad. Sci. U.S.A.">
        <title>The N-terminal amino-acid sequence of bovine proparathyroid hormone.</title>
        <authorList>
            <person name="Hamilton J.W."/>
            <person name="Niall H.D."/>
            <person name="Jacobs J.W."/>
            <person name="Keutmann H.T."/>
            <person name="Potts J.T. Jr."/>
            <person name="Cohn D.V."/>
        </authorList>
    </citation>
    <scope>PROTEIN SEQUENCE OF 26-115</scope>
</reference>
<reference key="6">
    <citation type="journal article" date="1970" name="Hoppe-Seyler's Z. Physiol. Chem.">
        <title>The amino acid sequence of bovine parathyroid hormone I.</title>
        <authorList>
            <person name="Niall H.D."/>
            <person name="Keutmann H.T."/>
            <person name="Sauer R."/>
            <person name="Hogan M.L."/>
            <person name="Dawson B.F."/>
            <person name="Aurbach G.D."/>
            <person name="Potts J.T. Jr."/>
        </authorList>
    </citation>
    <scope>PROTEIN SEQUENCE OF 32-115</scope>
    <scope>SUBCELLULAR LOCATION</scope>
</reference>
<reference key="7">
    <citation type="journal article" date="1970" name="Proc. Natl. Acad. Sci. U.S.A.">
        <title>Bovine parathyroid hormone: amino acid sequence.</title>
        <authorList>
            <person name="Brewer H.B. Jr."/>
            <person name="Ronan R."/>
        </authorList>
    </citation>
    <scope>PROTEIN SEQUENCE OF 32-115</scope>
</reference>
<reference key="8">
    <citation type="journal article" date="1971" name="Proc. Natl. Acad. Sci. U.S.A.">
        <title>Synthesis of a biologically active N-terminal tetratriacontapeptide of parathyroid hormone.</title>
        <authorList>
            <person name="Potts J.T. Jr."/>
            <person name="Tregear G.W."/>
            <person name="Keutmann H.T."/>
            <person name="Niall H.D."/>
            <person name="Sauer R."/>
            <person name="Deftos L.J."/>
            <person name="Dawson B.F."/>
            <person name="Hogan M.L."/>
            <person name="Aurbach G.D."/>
        </authorList>
    </citation>
    <scope>SYNTHESIS OF 32-65</scope>
</reference>
<reference key="9">
    <citation type="journal article" date="2000" name="Biochem. Biophys. Res. Commun.">
        <title>Solution structures of human parathyroid hormone fragments hPTH(1-34) and hPTH(1-39) and bovine parathyroid hormone fragment bPTH(1-37).</title>
        <authorList>
            <person name="Marx U.C."/>
            <person name="Adermann K."/>
            <person name="Bayer P."/>
            <person name="Forssmann W.-G."/>
            <person name="Rosch P."/>
        </authorList>
    </citation>
    <scope>STRUCTURE BY NMR OF 32-68</scope>
</reference>
<name>PTHY_BOVIN</name>
<dbReference type="EMBL" id="V00106">
    <property type="protein sequence ID" value="CAA23439.1"/>
    <property type="molecule type" value="mRNA"/>
</dbReference>
<dbReference type="EMBL" id="J00024">
    <property type="protein sequence ID" value="AAA30747.1"/>
    <property type="molecule type" value="mRNA"/>
</dbReference>
<dbReference type="EMBL" id="K01938">
    <property type="protein sequence ID" value="AAA30749.1"/>
    <property type="molecule type" value="Genomic_DNA"/>
</dbReference>
<dbReference type="EMBL" id="M25082">
    <property type="protein sequence ID" value="AAA30748.1"/>
    <property type="molecule type" value="mRNA"/>
</dbReference>
<dbReference type="PIR" id="A24949">
    <property type="entry name" value="PTBO"/>
</dbReference>
<dbReference type="RefSeq" id="NP_776379.2">
    <property type="nucleotide sequence ID" value="NM_173954.2"/>
</dbReference>
<dbReference type="PDB" id="1ZWC">
    <property type="method" value="NMR"/>
    <property type="chains" value="A=32-68"/>
</dbReference>
<dbReference type="PDBsum" id="1ZWC"/>
<dbReference type="SMR" id="P01268"/>
<dbReference type="FunCoup" id="P01268">
    <property type="interactions" value="12"/>
</dbReference>
<dbReference type="STRING" id="9913.ENSBTAP00000057235"/>
<dbReference type="MetOSite" id="P01268"/>
<dbReference type="PaxDb" id="9913-ENSBTAP00000025399"/>
<dbReference type="Ensembl" id="ENSBTAT00000025399.3">
    <property type="protein sequence ID" value="ENSBTAP00000025399.2"/>
    <property type="gene ID" value="ENSBTAG00000019080.4"/>
</dbReference>
<dbReference type="GeneID" id="280903"/>
<dbReference type="KEGG" id="bta:280903"/>
<dbReference type="CTD" id="5741"/>
<dbReference type="VEuPathDB" id="HostDB:ENSBTAG00000019080"/>
<dbReference type="VGNC" id="VGNC:33513">
    <property type="gene designation" value="PTH"/>
</dbReference>
<dbReference type="eggNOG" id="ENOG502SB2W">
    <property type="taxonomic scope" value="Eukaryota"/>
</dbReference>
<dbReference type="GeneTree" id="ENSGT00390000018603"/>
<dbReference type="HOGENOM" id="CLU_164143_0_0_1"/>
<dbReference type="InParanoid" id="P01268"/>
<dbReference type="OrthoDB" id="9890537at2759"/>
<dbReference type="TreeFam" id="TF336197"/>
<dbReference type="Reactome" id="R-BTA-373080">
    <property type="pathway name" value="Class B/2 (Secretin family receptors)"/>
</dbReference>
<dbReference type="Reactome" id="R-BTA-418555">
    <property type="pathway name" value="G alpha (s) signalling events"/>
</dbReference>
<dbReference type="EvolutionaryTrace" id="P01268"/>
<dbReference type="Proteomes" id="UP000009136">
    <property type="component" value="Chromosome 15"/>
</dbReference>
<dbReference type="Bgee" id="ENSBTAG00000019080">
    <property type="expression patterns" value="Expressed in Ammon's horn and 5 other cell types or tissues"/>
</dbReference>
<dbReference type="GO" id="GO:0005615">
    <property type="term" value="C:extracellular space"/>
    <property type="evidence" value="ECO:0000318"/>
    <property type="project" value="GO_Central"/>
</dbReference>
<dbReference type="GO" id="GO:0005179">
    <property type="term" value="F:hormone activity"/>
    <property type="evidence" value="ECO:0000318"/>
    <property type="project" value="GO_Central"/>
</dbReference>
<dbReference type="GO" id="GO:0031856">
    <property type="term" value="F:parathyroid hormone receptor binding"/>
    <property type="evidence" value="ECO:0000318"/>
    <property type="project" value="GO_Central"/>
</dbReference>
<dbReference type="GO" id="GO:0051428">
    <property type="term" value="F:peptide hormone receptor binding"/>
    <property type="evidence" value="ECO:0000250"/>
    <property type="project" value="UniProtKB"/>
</dbReference>
<dbReference type="GO" id="GO:0031857">
    <property type="term" value="F:type 1 parathyroid hormone receptor binding"/>
    <property type="evidence" value="ECO:0007669"/>
    <property type="project" value="Ensembl"/>
</dbReference>
<dbReference type="GO" id="GO:0007189">
    <property type="term" value="P:adenylate cyclase-activating G protein-coupled receptor signaling pathway"/>
    <property type="evidence" value="ECO:0007669"/>
    <property type="project" value="Ensembl"/>
</dbReference>
<dbReference type="GO" id="GO:0030282">
    <property type="term" value="P:bone mineralization"/>
    <property type="evidence" value="ECO:0007669"/>
    <property type="project" value="Ensembl"/>
</dbReference>
<dbReference type="GO" id="GO:0007267">
    <property type="term" value="P:cell-cell signaling"/>
    <property type="evidence" value="ECO:0000318"/>
    <property type="project" value="GO_Central"/>
</dbReference>
<dbReference type="GO" id="GO:0048873">
    <property type="term" value="P:homeostasis of number of cells within a tissue"/>
    <property type="evidence" value="ECO:0007669"/>
    <property type="project" value="Ensembl"/>
</dbReference>
<dbReference type="GO" id="GO:0006874">
    <property type="term" value="P:intracellular calcium ion homeostasis"/>
    <property type="evidence" value="ECO:0007669"/>
    <property type="project" value="Ensembl"/>
</dbReference>
<dbReference type="GO" id="GO:0010960">
    <property type="term" value="P:magnesium ion homeostasis"/>
    <property type="evidence" value="ECO:0007669"/>
    <property type="project" value="Ensembl"/>
</dbReference>
<dbReference type="GO" id="GO:0071866">
    <property type="term" value="P:negative regulation of apoptotic process in bone marrow cell"/>
    <property type="evidence" value="ECO:0007669"/>
    <property type="project" value="Ensembl"/>
</dbReference>
<dbReference type="GO" id="GO:0010629">
    <property type="term" value="P:negative regulation of gene expression"/>
    <property type="evidence" value="ECO:0007669"/>
    <property type="project" value="Ensembl"/>
</dbReference>
<dbReference type="GO" id="GO:0055062">
    <property type="term" value="P:phosphate ion homeostasis"/>
    <property type="evidence" value="ECO:0007669"/>
    <property type="project" value="Ensembl"/>
</dbReference>
<dbReference type="GO" id="GO:0030501">
    <property type="term" value="P:positive regulation of bone mineralization"/>
    <property type="evidence" value="ECO:0007669"/>
    <property type="project" value="Ensembl"/>
</dbReference>
<dbReference type="GO" id="GO:0071864">
    <property type="term" value="P:positive regulation of cell proliferation in bone marrow"/>
    <property type="evidence" value="ECO:0007669"/>
    <property type="project" value="Ensembl"/>
</dbReference>
<dbReference type="GO" id="GO:0046326">
    <property type="term" value="P:positive regulation of D-glucose import"/>
    <property type="evidence" value="ECO:0000250"/>
    <property type="project" value="UniProtKB"/>
</dbReference>
<dbReference type="GO" id="GO:0045725">
    <property type="term" value="P:positive regulation of glycogen biosynthetic process"/>
    <property type="evidence" value="ECO:0000250"/>
    <property type="project" value="UniProtKB"/>
</dbReference>
<dbReference type="GO" id="GO:0060732">
    <property type="term" value="P:positive regulation of inositol phosphate biosynthetic process"/>
    <property type="evidence" value="ECO:0007669"/>
    <property type="project" value="Ensembl"/>
</dbReference>
<dbReference type="GO" id="GO:0090290">
    <property type="term" value="P:positive regulation of osteoclast proliferation"/>
    <property type="evidence" value="ECO:0007669"/>
    <property type="project" value="Ensembl"/>
</dbReference>
<dbReference type="GO" id="GO:0009967">
    <property type="term" value="P:positive regulation of signal transduction"/>
    <property type="evidence" value="ECO:0007669"/>
    <property type="project" value="Ensembl"/>
</dbReference>
<dbReference type="GO" id="GO:0045944">
    <property type="term" value="P:positive regulation of transcription by RNA polymerase II"/>
    <property type="evidence" value="ECO:0007669"/>
    <property type="project" value="Ensembl"/>
</dbReference>
<dbReference type="GO" id="GO:0006366">
    <property type="term" value="P:transcription by RNA polymerase II"/>
    <property type="evidence" value="ECO:0007669"/>
    <property type="project" value="Ensembl"/>
</dbReference>
<dbReference type="InterPro" id="IPR003625">
    <property type="entry name" value="PTH"/>
</dbReference>
<dbReference type="InterPro" id="IPR001415">
    <property type="entry name" value="PTH/PTH-rel"/>
</dbReference>
<dbReference type="PANTHER" id="PTHR10541">
    <property type="entry name" value="PARATHYROID HORMONE"/>
    <property type="match status" value="1"/>
</dbReference>
<dbReference type="PANTHER" id="PTHR10541:SF2">
    <property type="entry name" value="PARATHYROID HORMONE"/>
    <property type="match status" value="1"/>
</dbReference>
<dbReference type="Pfam" id="PF01279">
    <property type="entry name" value="Parathyroid"/>
    <property type="match status" value="1"/>
</dbReference>
<dbReference type="PIRSF" id="PIRSF001832">
    <property type="entry name" value="PTH"/>
    <property type="match status" value="1"/>
</dbReference>
<dbReference type="SMART" id="SM00087">
    <property type="entry name" value="PTH"/>
    <property type="match status" value="1"/>
</dbReference>
<dbReference type="PROSITE" id="PS00335">
    <property type="entry name" value="PARATHYROID"/>
    <property type="match status" value="1"/>
</dbReference>
<comment type="function">
    <text evidence="1">Parathyroid hormone elevates calcium level by dissolving the salts in bone and preventing their renal excretion. Acts by binding to its receptor, PTH1R, activating G protein-coupled receptor signaling. Stimulates [1-14C]-2-deoxy-D-glucose (2DG) transport and glycogen synthesis in osteoblastic cells.</text>
</comment>
<comment type="subunit">
    <text evidence="1">Interacts with PTH1R (via N-terminal extracellular domain).</text>
</comment>
<comment type="subcellular location">
    <subcellularLocation>
        <location evidence="5">Secreted</location>
    </subcellularLocation>
</comment>
<comment type="similarity">
    <text evidence="8">Belongs to the parathyroid hormone family.</text>
</comment>
<protein>
    <recommendedName>
        <fullName evidence="7">Parathyroid hormone</fullName>
        <shortName evidence="6">PTH</shortName>
    </recommendedName>
    <alternativeName>
        <fullName>Parathyrin</fullName>
    </alternativeName>
</protein>
<evidence type="ECO:0000250" key="1">
    <source>
        <dbReference type="UniProtKB" id="P01270"/>
    </source>
</evidence>
<evidence type="ECO:0000256" key="2">
    <source>
        <dbReference type="SAM" id="MobiDB-lite"/>
    </source>
</evidence>
<evidence type="ECO:0000269" key="3">
    <source>
    </source>
</evidence>
<evidence type="ECO:0000269" key="4">
    <source>
    </source>
</evidence>
<evidence type="ECO:0000269" key="5">
    <source>
    </source>
</evidence>
<evidence type="ECO:0000303" key="6">
    <source>
    </source>
</evidence>
<evidence type="ECO:0000303" key="7">
    <source>
    </source>
</evidence>
<evidence type="ECO:0000305" key="8"/>
<evidence type="ECO:0007829" key="9">
    <source>
        <dbReference type="PDB" id="1ZWC"/>
    </source>
</evidence>
<sequence>MMSAKDMVKVMIVMLAICFLARSDGKSVKKRAVSEIQFMHNLGKHLSSMERVEWLRKKLQDVHNFVALGASIAYRDGSSQRPRKKEDNVLVESHQKSLGEADKADVDVLIKAKPQ</sequence>
<feature type="signal peptide" evidence="3">
    <location>
        <begin position="1"/>
        <end position="25"/>
    </location>
</feature>
<feature type="propeptide" id="PRO_0000023243" evidence="4 5">
    <location>
        <begin position="26"/>
        <end position="31"/>
    </location>
</feature>
<feature type="chain" id="PRO_0000023244" description="Parathyroid hormone" evidence="5">
    <location>
        <begin position="32"/>
        <end position="115"/>
    </location>
</feature>
<feature type="region of interest" description="Important for receptor binding" evidence="1">
    <location>
        <begin position="51"/>
        <end position="69"/>
    </location>
</feature>
<feature type="region of interest" description="Disordered" evidence="2">
    <location>
        <begin position="77"/>
        <end position="99"/>
    </location>
</feature>
<feature type="compositionally biased region" description="Basic and acidic residues" evidence="2">
    <location>
        <begin position="84"/>
        <end position="99"/>
    </location>
</feature>
<feature type="sequence conflict" description="In Ref. 4; AAA30749." evidence="8" ref="4">
    <original>V</original>
    <variation>G</variation>
    <location>
        <position position="106"/>
    </location>
</feature>
<feature type="helix" evidence="9">
    <location>
        <begin position="37"/>
        <end position="40"/>
    </location>
</feature>
<feature type="strand" evidence="9">
    <location>
        <begin position="43"/>
        <end position="45"/>
    </location>
</feature>
<feature type="strand" evidence="9">
    <location>
        <begin position="48"/>
        <end position="50"/>
    </location>
</feature>
<feature type="helix" evidence="9">
    <location>
        <begin position="53"/>
        <end position="60"/>
    </location>
</feature>
<feature type="turn" evidence="9">
    <location>
        <begin position="61"/>
        <end position="63"/>
    </location>
</feature>
<organism>
    <name type="scientific">Bos taurus</name>
    <name type="common">Bovine</name>
    <dbReference type="NCBI Taxonomy" id="9913"/>
    <lineage>
        <taxon>Eukaryota</taxon>
        <taxon>Metazoa</taxon>
        <taxon>Chordata</taxon>
        <taxon>Craniata</taxon>
        <taxon>Vertebrata</taxon>
        <taxon>Euteleostomi</taxon>
        <taxon>Mammalia</taxon>
        <taxon>Eutheria</taxon>
        <taxon>Laurasiatheria</taxon>
        <taxon>Artiodactyla</taxon>
        <taxon>Ruminantia</taxon>
        <taxon>Pecora</taxon>
        <taxon>Bovidae</taxon>
        <taxon>Bovinae</taxon>
        <taxon>Bos</taxon>
    </lineage>
</organism>
<accession>P01268</accession>
<keyword id="KW-0002">3D-structure</keyword>
<keyword id="KW-0165">Cleavage on pair of basic residues</keyword>
<keyword id="KW-0903">Direct protein sequencing</keyword>
<keyword id="KW-0372">Hormone</keyword>
<keyword id="KW-1185">Reference proteome</keyword>
<keyword id="KW-0964">Secreted</keyword>
<keyword id="KW-0732">Signal</keyword>
<proteinExistence type="evidence at protein level"/>